<name>Y7I4_ENCCU</name>
<sequence length="161" mass="18966">MRYLELGCISKTNKLFQKLQDLNPLLNIEIEAYSCKSSRRQRGRFVEKPLGYLLSALELRFPDYDFCGESWGSFRRKTLAEVLNEMTYSISTTHKNSDDVKEFVGFLEVILHRSVSLGGCEIFSYENRMGPFEDCLWYFSFLFFNKKQRRVVMLNAFMSRS</sequence>
<proteinExistence type="predicted"/>
<gene>
    <name type="ordered locus">ECU07_1840</name>
</gene>
<organism>
    <name type="scientific">Encephalitozoon cuniculi (strain GB-M1)</name>
    <name type="common">Microsporidian parasite</name>
    <dbReference type="NCBI Taxonomy" id="284813"/>
    <lineage>
        <taxon>Eukaryota</taxon>
        <taxon>Fungi</taxon>
        <taxon>Fungi incertae sedis</taxon>
        <taxon>Microsporidia</taxon>
        <taxon>Unikaryonidae</taxon>
        <taxon>Encephalitozoon</taxon>
    </lineage>
</organism>
<keyword id="KW-1185">Reference proteome</keyword>
<reference key="1">
    <citation type="journal article" date="2001" name="Nature">
        <title>Genome sequence and gene compaction of the eukaryote parasite Encephalitozoon cuniculi.</title>
        <authorList>
            <person name="Katinka M.D."/>
            <person name="Duprat S."/>
            <person name="Cornillot E."/>
            <person name="Metenier G."/>
            <person name="Thomarat F."/>
            <person name="Prensier G."/>
            <person name="Barbe V."/>
            <person name="Peyretaillade E."/>
            <person name="Brottier P."/>
            <person name="Wincker P."/>
            <person name="Delbac F."/>
            <person name="El Alaoui H."/>
            <person name="Peyret P."/>
            <person name="Saurin W."/>
            <person name="Gouy M."/>
            <person name="Weissenbach J."/>
            <person name="Vivares C.P."/>
        </authorList>
    </citation>
    <scope>NUCLEOTIDE SEQUENCE [LARGE SCALE GENOMIC DNA]</scope>
    <source>
        <strain>GB-M1</strain>
    </source>
</reference>
<dbReference type="EMBL" id="AL590447">
    <property type="protein sequence ID" value="CAD25715.1"/>
    <property type="molecule type" value="Genomic_DNA"/>
</dbReference>
<dbReference type="RefSeq" id="NP_586111.1">
    <property type="nucleotide sequence ID" value="NM_001041733.1"/>
</dbReference>
<dbReference type="RefSeq" id="NP_586122.1">
    <property type="nucleotide sequence ID" value="NM_001041955.1"/>
</dbReference>
<dbReference type="RefSeq" id="NP_586513.1">
    <property type="nucleotide sequence ID" value="NM_001042346.1"/>
</dbReference>
<dbReference type="SMR" id="Q8SUU2"/>
<dbReference type="STRING" id="284813.Q8SUU2"/>
<dbReference type="GeneID" id="859545"/>
<dbReference type="KEGG" id="ecu:ECU07_1840"/>
<dbReference type="KEGG" id="ecu:ECU10_0060"/>
<dbReference type="KEGG" id="ecu:ECU11_2080i"/>
<dbReference type="VEuPathDB" id="MicrosporidiaDB:ECU07_1840"/>
<dbReference type="VEuPathDB" id="MicrosporidiaDB:ECU10_0060"/>
<dbReference type="VEuPathDB" id="MicrosporidiaDB:ECU11_2080i"/>
<dbReference type="HOGENOM" id="CLU_121572_0_0_1"/>
<dbReference type="InParanoid" id="Q8SUU2"/>
<dbReference type="OrthoDB" id="277029at2759"/>
<dbReference type="Proteomes" id="UP000000819">
    <property type="component" value="Chromosome VII"/>
</dbReference>
<dbReference type="GO" id="GO:0005634">
    <property type="term" value="C:nucleus"/>
    <property type="evidence" value="ECO:0007669"/>
    <property type="project" value="TreeGrafter"/>
</dbReference>
<dbReference type="GO" id="GO:0000994">
    <property type="term" value="F:RNA polymerase III core binding"/>
    <property type="evidence" value="ECO:0007669"/>
    <property type="project" value="TreeGrafter"/>
</dbReference>
<dbReference type="GO" id="GO:0016480">
    <property type="term" value="P:negative regulation of transcription by RNA polymerase III"/>
    <property type="evidence" value="ECO:0007669"/>
    <property type="project" value="InterPro"/>
</dbReference>
<dbReference type="Gene3D" id="3.40.1000.50">
    <property type="entry name" value="Repressor of RNA polymerase III transcription Maf1"/>
    <property type="match status" value="1"/>
</dbReference>
<dbReference type="InterPro" id="IPR015257">
    <property type="entry name" value="Maf1"/>
</dbReference>
<dbReference type="InterPro" id="IPR038564">
    <property type="entry name" value="Maf1_sf"/>
</dbReference>
<dbReference type="PANTHER" id="PTHR22504">
    <property type="entry name" value="REPRESSOR OF RNA POLYMERASE III TRANSCRIPTION MAF1"/>
    <property type="match status" value="1"/>
</dbReference>
<dbReference type="PANTHER" id="PTHR22504:SF0">
    <property type="entry name" value="REPRESSOR OF RNA POLYMERASE III TRANSCRIPTION MAF1 HOMOLOG"/>
    <property type="match status" value="1"/>
</dbReference>
<dbReference type="Pfam" id="PF09174">
    <property type="entry name" value="Maf1"/>
    <property type="match status" value="1"/>
</dbReference>
<protein>
    <recommendedName>
        <fullName>Uncharacterized protein ECU07_1840</fullName>
    </recommendedName>
</protein>
<accession>Q8SUU2</accession>
<feature type="chain" id="PRO_0000223092" description="Uncharacterized protein ECU07_1840">
    <location>
        <begin position="1"/>
        <end position="161"/>
    </location>
</feature>